<organism>
    <name type="scientific">Sputnik virophage</name>
    <dbReference type="NCBI Taxonomy" id="543939"/>
    <lineage>
        <taxon>Viruses</taxon>
        <taxon>Varidnaviria</taxon>
        <taxon>Bamfordvirae</taxon>
        <taxon>Preplasmiviricota</taxon>
        <taxon>Maveriviricetes</taxon>
        <taxon>Priklausovirales</taxon>
        <taxon>Lavidaviridae</taxon>
        <taxon>Sputnikvirus</taxon>
        <taxon>Mimivirus-dependent virus Sputnik</taxon>
    </lineage>
</organism>
<name>V19_SPTNK</name>
<protein>
    <recommendedName>
        <fullName>Structural protein V19</fullName>
    </recommendedName>
</protein>
<comment type="subcellular location">
    <subcellularLocation>
        <location>Virion</location>
    </subcellularLocation>
</comment>
<sequence>MHHSFFYDSNTEKISLIAQAAYYDRTLTTPIEIYCNVNLFTFFDSIKHIGLGYNTPTGRDILFDVRFLGNNYYQDPETAPSYPPEFIQMQQEYPTLSNWNAVKTIQLVSNLLPINKESIPSFRNSNVGIINAQGILADFVPLVTNGPEARISIDFVATGPWRLIDMFGSVPIYMVDLYVYWTDQTGGQYLINIPPGRILTCKLVFIKKSLSKYLVSEK</sequence>
<reference key="1">
    <citation type="journal article" date="2008" name="Nature">
        <title>The virophage as a unique parasite of the giant mimivirus.</title>
        <authorList>
            <person name="La Scola B."/>
            <person name="Desnues C."/>
            <person name="Pagnier I."/>
            <person name="Robert C."/>
            <person name="Barrassi L."/>
            <person name="Fournous G."/>
            <person name="Merchat M."/>
            <person name="Suzan-Monti M."/>
            <person name="Forterre P."/>
            <person name="Koonin E."/>
            <person name="Raoult D."/>
        </authorList>
    </citation>
    <scope>NUCLEOTIDE SEQUENCE [GENOMIC DNA]</scope>
    <scope>IDENTIFICATION BY MASS SPECTROMETRY</scope>
</reference>
<feature type="chain" id="PRO_0000369827" description="Structural protein V19">
    <location>
        <begin position="1"/>
        <end position="218"/>
    </location>
</feature>
<accession>B4YNF9</accession>
<gene>
    <name type="ORF">ORF19</name>
</gene>
<organismHost>
    <name type="scientific">Acanthamoeba polyphaga</name>
    <name type="common">Amoeba</name>
    <dbReference type="NCBI Taxonomy" id="5757"/>
</organismHost>
<keyword id="KW-1185">Reference proteome</keyword>
<keyword id="KW-0946">Virion</keyword>
<proteinExistence type="evidence at protein level"/>
<dbReference type="EMBL" id="EU606015">
    <property type="protein sequence ID" value="ACF17003.1"/>
    <property type="molecule type" value="Genomic_DNA"/>
</dbReference>
<dbReference type="RefSeq" id="YP_002122380.1">
    <property type="nucleotide sequence ID" value="NC_011132.1"/>
</dbReference>
<dbReference type="SMR" id="B4YNF9"/>
<dbReference type="KEGG" id="vg:6760336"/>
<dbReference type="OrthoDB" id="30842at10239"/>
<dbReference type="Proteomes" id="UP000001863">
    <property type="component" value="Segment"/>
</dbReference>
<dbReference type="GO" id="GO:0044423">
    <property type="term" value="C:virion component"/>
    <property type="evidence" value="ECO:0007669"/>
    <property type="project" value="UniProtKB-KW"/>
</dbReference>
<dbReference type="Gene3D" id="2.60.120.1100">
    <property type="match status" value="1"/>
</dbReference>
<dbReference type="InterPro" id="IPR049413">
    <property type="entry name" value="V18/19-like_jelly_roll_sf"/>
</dbReference>